<comment type="function">
    <text evidence="1">Probably transcriptionally activates the LYN and BLK promoters and acts synergistically with RUNX1 to transactivate the BLK promoter.</text>
</comment>
<comment type="subunit">
    <text evidence="2 6">Interacts with LIM domains of LMO2. Interacts via its N-terminal region with RUNX1.</text>
</comment>
<comment type="subcellular location">
    <subcellularLocation>
        <location>Nucleus</location>
    </subcellularLocation>
</comment>
<comment type="alternative products">
    <event type="alternative splicing"/>
    <isoform>
        <id>Q9JHC9-1</id>
        <name>4</name>
        <sequence type="displayed"/>
    </isoform>
    <isoform>
        <id>Q9JHC9-2</id>
        <name evidence="6">1</name>
        <name evidence="9">elf-2a</name>
        <sequence type="described" ref="VSP_014160"/>
    </isoform>
    <isoform>
        <id>Q9JHC9-3</id>
        <name evidence="6">2</name>
        <name evidence="9">elf-2b</name>
        <sequence type="described" ref="VSP_014159 VSP_014160"/>
    </isoform>
    <isoform>
        <id>Q9JHC9-4</id>
        <name>3</name>
        <sequence type="described" ref="VSP_014159"/>
    </isoform>
</comment>
<comment type="tissue specificity">
    <text evidence="6">Expressed in all tissues examined. Highest levels in thymocytes and bone marrow.</text>
</comment>
<comment type="similarity">
    <text evidence="3">Belongs to the ETS family.</text>
</comment>
<organism>
    <name type="scientific">Mus musculus</name>
    <name type="common">Mouse</name>
    <dbReference type="NCBI Taxonomy" id="10090"/>
    <lineage>
        <taxon>Eukaryota</taxon>
        <taxon>Metazoa</taxon>
        <taxon>Chordata</taxon>
        <taxon>Craniata</taxon>
        <taxon>Vertebrata</taxon>
        <taxon>Euteleostomi</taxon>
        <taxon>Mammalia</taxon>
        <taxon>Eutheria</taxon>
        <taxon>Euarchontoglires</taxon>
        <taxon>Glires</taxon>
        <taxon>Rodentia</taxon>
        <taxon>Myomorpha</taxon>
        <taxon>Muroidea</taxon>
        <taxon>Muridae</taxon>
        <taxon>Murinae</taxon>
        <taxon>Mus</taxon>
        <taxon>Mus</taxon>
    </lineage>
</organism>
<keyword id="KW-0010">Activator</keyword>
<keyword id="KW-0025">Alternative splicing</keyword>
<keyword id="KW-0238">DNA-binding</keyword>
<keyword id="KW-1017">Isopeptide bond</keyword>
<keyword id="KW-0488">Methylation</keyword>
<keyword id="KW-0539">Nucleus</keyword>
<keyword id="KW-0597">Phosphoprotein</keyword>
<keyword id="KW-1185">Reference proteome</keyword>
<keyword id="KW-0804">Transcription</keyword>
<keyword id="KW-0805">Transcription regulation</keyword>
<keyword id="KW-0832">Ubl conjugation</keyword>
<gene>
    <name evidence="15" type="primary">Elf2</name>
    <name type="synonym">Nerf</name>
</gene>
<proteinExistence type="evidence at protein level"/>
<dbReference type="EMBL" id="AF256216">
    <property type="protein sequence ID" value="AAF67191.1"/>
    <property type="molecule type" value="mRNA"/>
</dbReference>
<dbReference type="EMBL" id="AF256217">
    <property type="protein sequence ID" value="AAF67192.1"/>
    <property type="molecule type" value="mRNA"/>
</dbReference>
<dbReference type="EMBL" id="AF256218">
    <property type="protein sequence ID" value="AAF67193.1"/>
    <property type="molecule type" value="mRNA"/>
</dbReference>
<dbReference type="EMBL" id="AF256219">
    <property type="protein sequence ID" value="AAF67194.1"/>
    <property type="molecule type" value="mRNA"/>
</dbReference>
<dbReference type="EMBL" id="AK088422">
    <property type="protein sequence ID" value="BAC40346.1"/>
    <property type="molecule type" value="mRNA"/>
</dbReference>
<dbReference type="EMBL" id="BC069901">
    <property type="protein sequence ID" value="AAH69901.1"/>
    <property type="molecule type" value="mRNA"/>
</dbReference>
<dbReference type="CCDS" id="CCDS17337.1">
    <molecule id="Q9JHC9-1"/>
</dbReference>
<dbReference type="CCDS" id="CCDS71240.1">
    <molecule id="Q9JHC9-3"/>
</dbReference>
<dbReference type="CCDS" id="CCDS71241.1">
    <molecule id="Q9JHC9-4"/>
</dbReference>
<dbReference type="CCDS" id="CCDS71242.1">
    <molecule id="Q9JHC9-2"/>
</dbReference>
<dbReference type="RefSeq" id="NP_001277988.1">
    <molecule id="Q9JHC9-2"/>
    <property type="nucleotide sequence ID" value="NM_001291059.1"/>
</dbReference>
<dbReference type="RefSeq" id="NP_001277991.1">
    <molecule id="Q9JHC9-3"/>
    <property type="nucleotide sequence ID" value="NM_001291062.1"/>
</dbReference>
<dbReference type="RefSeq" id="NP_001277992.1">
    <molecule id="Q9JHC9-4"/>
    <property type="nucleotide sequence ID" value="NM_001291063.1"/>
</dbReference>
<dbReference type="RefSeq" id="NP_075991.1">
    <molecule id="Q9JHC9-1"/>
    <property type="nucleotide sequence ID" value="NM_023502.2"/>
</dbReference>
<dbReference type="RefSeq" id="XP_036019180.1">
    <molecule id="Q9JHC9-1"/>
    <property type="nucleotide sequence ID" value="XM_036163287.1"/>
</dbReference>
<dbReference type="RefSeq" id="XP_036019181.1">
    <molecule id="Q9JHC9-2"/>
    <property type="nucleotide sequence ID" value="XM_036163288.1"/>
</dbReference>
<dbReference type="SMR" id="Q9JHC9"/>
<dbReference type="BioGRID" id="213319">
    <property type="interactions" value="7"/>
</dbReference>
<dbReference type="FunCoup" id="Q9JHC9">
    <property type="interactions" value="4224"/>
</dbReference>
<dbReference type="IntAct" id="Q9JHC9">
    <property type="interactions" value="2"/>
</dbReference>
<dbReference type="STRING" id="10090.ENSMUSP00000141197"/>
<dbReference type="GlyGen" id="Q9JHC9">
    <property type="glycosylation" value="11 sites, 1 O-linked glycan (11 sites)"/>
</dbReference>
<dbReference type="iPTMnet" id="Q9JHC9"/>
<dbReference type="PhosphoSitePlus" id="Q9JHC9"/>
<dbReference type="SwissPalm" id="Q9JHC9"/>
<dbReference type="jPOST" id="Q9JHC9"/>
<dbReference type="PaxDb" id="10090-ENSMUSP00000088678"/>
<dbReference type="PeptideAtlas" id="Q9JHC9"/>
<dbReference type="ProteomicsDB" id="277776">
    <molecule id="Q9JHC9-1"/>
</dbReference>
<dbReference type="ProteomicsDB" id="277777">
    <molecule id="Q9JHC9-2"/>
</dbReference>
<dbReference type="ProteomicsDB" id="277778">
    <molecule id="Q9JHC9-3"/>
</dbReference>
<dbReference type="ProteomicsDB" id="277779">
    <molecule id="Q9JHC9-4"/>
</dbReference>
<dbReference type="Pumba" id="Q9JHC9"/>
<dbReference type="Antibodypedia" id="896">
    <property type="antibodies" value="154 antibodies from 26 providers"/>
</dbReference>
<dbReference type="DNASU" id="69257"/>
<dbReference type="Ensembl" id="ENSMUST00000062009.14">
    <molecule id="Q9JHC9-2"/>
    <property type="protein sequence ID" value="ENSMUSP00000061076.7"/>
    <property type="gene ID" value="ENSMUSG00000037174.19"/>
</dbReference>
<dbReference type="Ensembl" id="ENSMUST00000108051.8">
    <molecule id="Q9JHC9-3"/>
    <property type="protein sequence ID" value="ENSMUSP00000103686.2"/>
    <property type="gene ID" value="ENSMUSG00000037174.19"/>
</dbReference>
<dbReference type="Ensembl" id="ENSMUST00000108053.9">
    <molecule id="Q9JHC9-4"/>
    <property type="protein sequence ID" value="ENSMUSP00000103688.3"/>
    <property type="gene ID" value="ENSMUSG00000037174.19"/>
</dbReference>
<dbReference type="Ensembl" id="ENSMUST00000163748.8">
    <molecule id="Q9JHC9-1"/>
    <property type="protein sequence ID" value="ENSMUSP00000126871.2"/>
    <property type="gene ID" value="ENSMUSG00000037174.19"/>
</dbReference>
<dbReference type="Ensembl" id="ENSMUST00000194641.6">
    <molecule id="Q9JHC9-1"/>
    <property type="protein sequence ID" value="ENSMUSP00000141197.2"/>
    <property type="gene ID" value="ENSMUSG00000037174.19"/>
</dbReference>
<dbReference type="GeneID" id="69257"/>
<dbReference type="KEGG" id="mmu:69257"/>
<dbReference type="UCSC" id="uc008pdo.2">
    <molecule id="Q9JHC9-3"/>
    <property type="organism name" value="mouse"/>
</dbReference>
<dbReference type="UCSC" id="uc008pdp.2">
    <molecule id="Q9JHC9-4"/>
    <property type="organism name" value="mouse"/>
</dbReference>
<dbReference type="UCSC" id="uc008pdq.2">
    <molecule id="Q9JHC9-1"/>
    <property type="organism name" value="mouse"/>
</dbReference>
<dbReference type="AGR" id="MGI:1916507"/>
<dbReference type="CTD" id="1998"/>
<dbReference type="MGI" id="MGI:1916507">
    <property type="gene designation" value="Elf2"/>
</dbReference>
<dbReference type="VEuPathDB" id="HostDB:ENSMUSG00000037174"/>
<dbReference type="eggNOG" id="KOG3804">
    <property type="taxonomic scope" value="Eukaryota"/>
</dbReference>
<dbReference type="GeneTree" id="ENSGT00940000154953"/>
<dbReference type="HOGENOM" id="CLU_027279_2_0_1"/>
<dbReference type="InParanoid" id="Q9JHC9"/>
<dbReference type="OMA" id="SSHVHCT"/>
<dbReference type="OrthoDB" id="8196042at2759"/>
<dbReference type="PhylomeDB" id="Q9JHC9"/>
<dbReference type="TreeFam" id="TF318679"/>
<dbReference type="Reactome" id="R-MMU-8939245">
    <property type="pathway name" value="RUNX1 regulates transcription of genes involved in BCR signaling"/>
</dbReference>
<dbReference type="BioGRID-ORCS" id="69257">
    <property type="hits" value="4 hits in 81 CRISPR screens"/>
</dbReference>
<dbReference type="ChiTaRS" id="Elf2">
    <property type="organism name" value="mouse"/>
</dbReference>
<dbReference type="PRO" id="PR:Q9JHC9"/>
<dbReference type="Proteomes" id="UP000000589">
    <property type="component" value="Chromosome 3"/>
</dbReference>
<dbReference type="RNAct" id="Q9JHC9">
    <property type="molecule type" value="protein"/>
</dbReference>
<dbReference type="Bgee" id="ENSMUSG00000037174">
    <property type="expression patterns" value="Expressed in spermatocyte and 284 other cell types or tissues"/>
</dbReference>
<dbReference type="ExpressionAtlas" id="Q9JHC9">
    <property type="expression patterns" value="baseline and differential"/>
</dbReference>
<dbReference type="GO" id="GO:0005829">
    <property type="term" value="C:cytosol"/>
    <property type="evidence" value="ECO:0007669"/>
    <property type="project" value="Ensembl"/>
</dbReference>
<dbReference type="GO" id="GO:0016604">
    <property type="term" value="C:nuclear body"/>
    <property type="evidence" value="ECO:0007669"/>
    <property type="project" value="Ensembl"/>
</dbReference>
<dbReference type="GO" id="GO:0000981">
    <property type="term" value="F:DNA-binding transcription factor activity, RNA polymerase II-specific"/>
    <property type="evidence" value="ECO:0007669"/>
    <property type="project" value="Ensembl"/>
</dbReference>
<dbReference type="GO" id="GO:1990837">
    <property type="term" value="F:sequence-specific double-stranded DNA binding"/>
    <property type="evidence" value="ECO:0007669"/>
    <property type="project" value="Ensembl"/>
</dbReference>
<dbReference type="GO" id="GO:0045893">
    <property type="term" value="P:positive regulation of DNA-templated transcription"/>
    <property type="evidence" value="ECO:0000250"/>
    <property type="project" value="UniProtKB"/>
</dbReference>
<dbReference type="GO" id="GO:0006357">
    <property type="term" value="P:regulation of transcription by RNA polymerase II"/>
    <property type="evidence" value="ECO:0000250"/>
    <property type="project" value="UniProtKB"/>
</dbReference>
<dbReference type="FunFam" id="1.10.10.10:FF:000066">
    <property type="entry name" value="ETS-related transcription factor Elf-2 isoform X1"/>
    <property type="match status" value="1"/>
</dbReference>
<dbReference type="Gene3D" id="1.10.10.10">
    <property type="entry name" value="Winged helix-like DNA-binding domain superfamily/Winged helix DNA-binding domain"/>
    <property type="match status" value="1"/>
</dbReference>
<dbReference type="InterPro" id="IPR000418">
    <property type="entry name" value="Ets_dom"/>
</dbReference>
<dbReference type="InterPro" id="IPR046328">
    <property type="entry name" value="ETS_fam"/>
</dbReference>
<dbReference type="InterPro" id="IPR022084">
    <property type="entry name" value="TF_Elf_N"/>
</dbReference>
<dbReference type="InterPro" id="IPR036388">
    <property type="entry name" value="WH-like_DNA-bd_sf"/>
</dbReference>
<dbReference type="InterPro" id="IPR036390">
    <property type="entry name" value="WH_DNA-bd_sf"/>
</dbReference>
<dbReference type="PANTHER" id="PTHR11849">
    <property type="entry name" value="ETS"/>
    <property type="match status" value="1"/>
</dbReference>
<dbReference type="PANTHER" id="PTHR11849:SF10">
    <property type="entry name" value="ETS-RELATED TRANSCRIPTION FACTOR ELF-2"/>
    <property type="match status" value="1"/>
</dbReference>
<dbReference type="Pfam" id="PF12310">
    <property type="entry name" value="Elf-1_N"/>
    <property type="match status" value="1"/>
</dbReference>
<dbReference type="Pfam" id="PF00178">
    <property type="entry name" value="Ets"/>
    <property type="match status" value="1"/>
</dbReference>
<dbReference type="PRINTS" id="PR00454">
    <property type="entry name" value="ETSDOMAIN"/>
</dbReference>
<dbReference type="SMART" id="SM00413">
    <property type="entry name" value="ETS"/>
    <property type="match status" value="1"/>
</dbReference>
<dbReference type="SUPFAM" id="SSF46785">
    <property type="entry name" value="Winged helix' DNA-binding domain"/>
    <property type="match status" value="1"/>
</dbReference>
<dbReference type="PROSITE" id="PS00345">
    <property type="entry name" value="ETS_DOMAIN_1"/>
    <property type="match status" value="1"/>
</dbReference>
<dbReference type="PROSITE" id="PS00346">
    <property type="entry name" value="ETS_DOMAIN_2"/>
    <property type="match status" value="1"/>
</dbReference>
<dbReference type="PROSITE" id="PS50061">
    <property type="entry name" value="ETS_DOMAIN_3"/>
    <property type="match status" value="1"/>
</dbReference>
<sequence>MASAVVDSGGSALELPSDGGENQEGGDTGPDCPAVIVEPVPSARLEQGYAAQVLVYDDETYMMQDVAEEQEVETENSETVEASVHSSNAHCTDKTIEAAEALLHMESPTCLRDSRSPVEVFVPPCISTPEFIHAAMRPDVITETVVEVSTEESEPMDASPIPTSPDSHEPMKKKKVGRKPKTQQSPVSNGSPELGIKKKAREGKGNTTYLWEFLLDLLQDKNTCPRYIKWTQREKGIFKLVDSKAVSKLWGKHKNKPDMNYETMGRALRYYYQRGILAKVEGQRLVYQFKDMPKNIVVIDDDKSETCPEDLAAAADDKSLERVSLSAESLLKAATAVRGGKNSSPLNCSRAEKGVARVVNITSPTHDGSSRSPTTTAPVSAAAAPRTVRVAMQVPVVMTSLGQKISAVAVQSVNAGTGSPLITSTSPASASSPKVVIQTVPTVMPASTENGDRITMQPAKIITIPATQLAQCQLQAKSNLTGSGSINIVGTPLAVRALTPVSIAHGTPVMRLSVPAQQASGQTPPRVISALLKGPEGKSEAKKQEHDVKTLQLVEEKGADGNKTVTHVVVVSAPSAIALPVTMKTEGLVTCEK</sequence>
<name>ELF2_MOUSE</name>
<feature type="chain" id="PRO_0000204088" description="ETS-related transcription factor Elf-2">
    <location>
        <begin position="1"/>
        <end position="593"/>
    </location>
</feature>
<feature type="DNA-binding region" description="ETS" evidence="4">
    <location>
        <begin position="208"/>
        <end position="290"/>
    </location>
</feature>
<feature type="region of interest" description="Disordered" evidence="5">
    <location>
        <begin position="1"/>
        <end position="34"/>
    </location>
</feature>
<feature type="region of interest" description="Disordered" evidence="5">
    <location>
        <begin position="146"/>
        <end position="199"/>
    </location>
</feature>
<feature type="region of interest" description="Disordered" evidence="5">
    <location>
        <begin position="362"/>
        <end position="383"/>
    </location>
</feature>
<feature type="compositionally biased region" description="Basic residues" evidence="5">
    <location>
        <begin position="171"/>
        <end position="181"/>
    </location>
</feature>
<feature type="compositionally biased region" description="Polar residues" evidence="5">
    <location>
        <begin position="182"/>
        <end position="191"/>
    </location>
</feature>
<feature type="compositionally biased region" description="Low complexity" evidence="5">
    <location>
        <begin position="370"/>
        <end position="383"/>
    </location>
</feature>
<feature type="modified residue" description="Phosphoserine" evidence="16">
    <location>
        <position position="107"/>
    </location>
</feature>
<feature type="modified residue" description="Phosphothreonine" evidence="16">
    <location>
        <position position="182"/>
    </location>
</feature>
<feature type="modified residue" description="Phosphoserine" evidence="16">
    <location>
        <position position="185"/>
    </location>
</feature>
<feature type="modified residue" description="Phosphoserine" evidence="16">
    <location>
        <position position="191"/>
    </location>
</feature>
<feature type="modified residue" description="Phosphoserine" evidence="2">
    <location>
        <position position="363"/>
    </location>
</feature>
<feature type="modified residue" description="Phosphoserine" evidence="16">
    <location>
        <position position="372"/>
    </location>
</feature>
<feature type="modified residue" description="Phosphothreonine" evidence="16">
    <location>
        <position position="376"/>
    </location>
</feature>
<feature type="modified residue" description="Phosphoserine" evidence="2">
    <location>
        <position position="432"/>
    </location>
</feature>
<feature type="modified residue" description="Omega-N-methylarginine" evidence="17">
    <location>
        <position position="496"/>
    </location>
</feature>
<feature type="modified residue" description="Phosphothreonine" evidence="2">
    <location>
        <position position="523"/>
    </location>
</feature>
<feature type="cross-link" description="Glycyl lysine isopeptide (Lys-Gly) (interchain with G-Cter in SUMO2)" evidence="2">
    <location>
        <position position="538"/>
    </location>
</feature>
<feature type="splice variant" id="VSP_014159" description="In isoform 2 and isoform 3." evidence="8 9 10">
    <original>MASAVVDSGGSALELPSDGGENQEGGDTGPDCPAVIVEPVPSARLEQGYAAQVLVYDDETYMMQDVAEEQEVETENSET</original>
    <variation>MATSLHEGPTNQLDLLIRA</variation>
    <location>
        <begin position="1"/>
        <end position="79"/>
    </location>
</feature>
<feature type="splice variant" id="VSP_014160" description="In isoform 1 and isoform 2." evidence="7 8 9">
    <location>
        <begin position="118"/>
        <end position="129"/>
    </location>
</feature>
<feature type="sequence conflict" description="In Ref. 3; BAC40346." evidence="11" ref="3">
    <original>S</original>
    <variation>W</variation>
    <location>
        <position position="159"/>
    </location>
</feature>
<feature type="sequence conflict" description="In Ref. 4; AAH69901." evidence="11" ref="4">
    <original>M</original>
    <variation>K</variation>
    <location>
        <position position="171"/>
    </location>
</feature>
<evidence type="ECO:0000250" key="1"/>
<evidence type="ECO:0000250" key="2">
    <source>
        <dbReference type="UniProtKB" id="Q15723"/>
    </source>
</evidence>
<evidence type="ECO:0000255" key="3"/>
<evidence type="ECO:0000255" key="4">
    <source>
        <dbReference type="PROSITE-ProRule" id="PRU00237"/>
    </source>
</evidence>
<evidence type="ECO:0000256" key="5">
    <source>
        <dbReference type="SAM" id="MobiDB-lite"/>
    </source>
</evidence>
<evidence type="ECO:0000269" key="6">
    <source>
    </source>
</evidence>
<evidence type="ECO:0000303" key="7">
    <source>
    </source>
</evidence>
<evidence type="ECO:0000303" key="8">
    <source>
    </source>
</evidence>
<evidence type="ECO:0000303" key="9">
    <source>
    </source>
</evidence>
<evidence type="ECO:0000303" key="10">
    <source ref="2"/>
</evidence>
<evidence type="ECO:0000305" key="11"/>
<evidence type="ECO:0000312" key="12">
    <source>
        <dbReference type="EMBL" id="AAF67191.1"/>
    </source>
</evidence>
<evidence type="ECO:0000312" key="13">
    <source>
        <dbReference type="EMBL" id="AAF67192.1"/>
    </source>
</evidence>
<evidence type="ECO:0000312" key="14">
    <source>
        <dbReference type="EMBL" id="AAH69901.1"/>
    </source>
</evidence>
<evidence type="ECO:0000312" key="15">
    <source>
        <dbReference type="MGI" id="MGI:1916507"/>
    </source>
</evidence>
<evidence type="ECO:0007744" key="16">
    <source>
    </source>
</evidence>
<evidence type="ECO:0007744" key="17">
    <source>
    </source>
</evidence>
<reference evidence="11 12" key="1">
    <citation type="journal article" date="1997" name="Leukemia">
        <title>Elf-2, a rhombotin-2 binding ets transcription factor: discovery and potential role in T cell leukemia.</title>
        <authorList>
            <person name="Wilkinson D.A."/>
            <person name="Neale G.A.M."/>
            <person name="Mao S."/>
            <person name="Naeve C.W."/>
            <person name="Goorha R.M."/>
        </authorList>
    </citation>
    <scope>NUCLEOTIDE SEQUENCE [MRNA] (ISOFORMS 1 AND 2)</scope>
    <scope>TISSUE SPECIFICITY</scope>
    <scope>INTERACTION WITH LMO2</scope>
    <source>
        <tissue evidence="6">T-cell</tissue>
    </source>
</reference>
<reference evidence="11 13" key="2">
    <citation type="submission" date="2000-04" db="EMBL/GenBank/DDBJ databases">
        <authorList>
            <person name="Wilkinson D.A."/>
            <person name="Neale G.A.M."/>
            <person name="Mao S."/>
            <person name="Fernandes E.R."/>
            <person name="Davenport J.W."/>
            <person name="Naeve C.W."/>
            <person name="Goorha R.M."/>
        </authorList>
    </citation>
    <scope>NUCLEOTIDE SEQUENCE [MRNA] (ISOFORMS 3 AND 4)</scope>
</reference>
<reference key="3">
    <citation type="journal article" date="2005" name="Science">
        <title>The transcriptional landscape of the mammalian genome.</title>
        <authorList>
            <person name="Carninci P."/>
            <person name="Kasukawa T."/>
            <person name="Katayama S."/>
            <person name="Gough J."/>
            <person name="Frith M.C."/>
            <person name="Maeda N."/>
            <person name="Oyama R."/>
            <person name="Ravasi T."/>
            <person name="Lenhard B."/>
            <person name="Wells C."/>
            <person name="Kodzius R."/>
            <person name="Shimokawa K."/>
            <person name="Bajic V.B."/>
            <person name="Brenner S.E."/>
            <person name="Batalov S."/>
            <person name="Forrest A.R."/>
            <person name="Zavolan M."/>
            <person name="Davis M.J."/>
            <person name="Wilming L.G."/>
            <person name="Aidinis V."/>
            <person name="Allen J.E."/>
            <person name="Ambesi-Impiombato A."/>
            <person name="Apweiler R."/>
            <person name="Aturaliya R.N."/>
            <person name="Bailey T.L."/>
            <person name="Bansal M."/>
            <person name="Baxter L."/>
            <person name="Beisel K.W."/>
            <person name="Bersano T."/>
            <person name="Bono H."/>
            <person name="Chalk A.M."/>
            <person name="Chiu K.P."/>
            <person name="Choudhary V."/>
            <person name="Christoffels A."/>
            <person name="Clutterbuck D.R."/>
            <person name="Crowe M.L."/>
            <person name="Dalla E."/>
            <person name="Dalrymple B.P."/>
            <person name="de Bono B."/>
            <person name="Della Gatta G."/>
            <person name="di Bernardo D."/>
            <person name="Down T."/>
            <person name="Engstrom P."/>
            <person name="Fagiolini M."/>
            <person name="Faulkner G."/>
            <person name="Fletcher C.F."/>
            <person name="Fukushima T."/>
            <person name="Furuno M."/>
            <person name="Futaki S."/>
            <person name="Gariboldi M."/>
            <person name="Georgii-Hemming P."/>
            <person name="Gingeras T.R."/>
            <person name="Gojobori T."/>
            <person name="Green R.E."/>
            <person name="Gustincich S."/>
            <person name="Harbers M."/>
            <person name="Hayashi Y."/>
            <person name="Hensch T.K."/>
            <person name="Hirokawa N."/>
            <person name="Hill D."/>
            <person name="Huminiecki L."/>
            <person name="Iacono M."/>
            <person name="Ikeo K."/>
            <person name="Iwama A."/>
            <person name="Ishikawa T."/>
            <person name="Jakt M."/>
            <person name="Kanapin A."/>
            <person name="Katoh M."/>
            <person name="Kawasawa Y."/>
            <person name="Kelso J."/>
            <person name="Kitamura H."/>
            <person name="Kitano H."/>
            <person name="Kollias G."/>
            <person name="Krishnan S.P."/>
            <person name="Kruger A."/>
            <person name="Kummerfeld S.K."/>
            <person name="Kurochkin I.V."/>
            <person name="Lareau L.F."/>
            <person name="Lazarevic D."/>
            <person name="Lipovich L."/>
            <person name="Liu J."/>
            <person name="Liuni S."/>
            <person name="McWilliam S."/>
            <person name="Madan Babu M."/>
            <person name="Madera M."/>
            <person name="Marchionni L."/>
            <person name="Matsuda H."/>
            <person name="Matsuzawa S."/>
            <person name="Miki H."/>
            <person name="Mignone F."/>
            <person name="Miyake S."/>
            <person name="Morris K."/>
            <person name="Mottagui-Tabar S."/>
            <person name="Mulder N."/>
            <person name="Nakano N."/>
            <person name="Nakauchi H."/>
            <person name="Ng P."/>
            <person name="Nilsson R."/>
            <person name="Nishiguchi S."/>
            <person name="Nishikawa S."/>
            <person name="Nori F."/>
            <person name="Ohara O."/>
            <person name="Okazaki Y."/>
            <person name="Orlando V."/>
            <person name="Pang K.C."/>
            <person name="Pavan W.J."/>
            <person name="Pavesi G."/>
            <person name="Pesole G."/>
            <person name="Petrovsky N."/>
            <person name="Piazza S."/>
            <person name="Reed J."/>
            <person name="Reid J.F."/>
            <person name="Ring B.Z."/>
            <person name="Ringwald M."/>
            <person name="Rost B."/>
            <person name="Ruan Y."/>
            <person name="Salzberg S.L."/>
            <person name="Sandelin A."/>
            <person name="Schneider C."/>
            <person name="Schoenbach C."/>
            <person name="Sekiguchi K."/>
            <person name="Semple C.A."/>
            <person name="Seno S."/>
            <person name="Sessa L."/>
            <person name="Sheng Y."/>
            <person name="Shibata Y."/>
            <person name="Shimada H."/>
            <person name="Shimada K."/>
            <person name="Silva D."/>
            <person name="Sinclair B."/>
            <person name="Sperling S."/>
            <person name="Stupka E."/>
            <person name="Sugiura K."/>
            <person name="Sultana R."/>
            <person name="Takenaka Y."/>
            <person name="Taki K."/>
            <person name="Tammoja K."/>
            <person name="Tan S.L."/>
            <person name="Tang S."/>
            <person name="Taylor M.S."/>
            <person name="Tegner J."/>
            <person name="Teichmann S.A."/>
            <person name="Ueda H.R."/>
            <person name="van Nimwegen E."/>
            <person name="Verardo R."/>
            <person name="Wei C.L."/>
            <person name="Yagi K."/>
            <person name="Yamanishi H."/>
            <person name="Zabarovsky E."/>
            <person name="Zhu S."/>
            <person name="Zimmer A."/>
            <person name="Hide W."/>
            <person name="Bult C."/>
            <person name="Grimmond S.M."/>
            <person name="Teasdale R.D."/>
            <person name="Liu E.T."/>
            <person name="Brusic V."/>
            <person name="Quackenbush J."/>
            <person name="Wahlestedt C."/>
            <person name="Mattick J.S."/>
            <person name="Hume D.A."/>
            <person name="Kai C."/>
            <person name="Sasaki D."/>
            <person name="Tomaru Y."/>
            <person name="Fukuda S."/>
            <person name="Kanamori-Katayama M."/>
            <person name="Suzuki M."/>
            <person name="Aoki J."/>
            <person name="Arakawa T."/>
            <person name="Iida J."/>
            <person name="Imamura K."/>
            <person name="Itoh M."/>
            <person name="Kato T."/>
            <person name="Kawaji H."/>
            <person name="Kawagashira N."/>
            <person name="Kawashima T."/>
            <person name="Kojima M."/>
            <person name="Kondo S."/>
            <person name="Konno H."/>
            <person name="Nakano K."/>
            <person name="Ninomiya N."/>
            <person name="Nishio T."/>
            <person name="Okada M."/>
            <person name="Plessy C."/>
            <person name="Shibata K."/>
            <person name="Shiraki T."/>
            <person name="Suzuki S."/>
            <person name="Tagami M."/>
            <person name="Waki K."/>
            <person name="Watahiki A."/>
            <person name="Okamura-Oho Y."/>
            <person name="Suzuki H."/>
            <person name="Kawai J."/>
            <person name="Hayashizaki Y."/>
        </authorList>
    </citation>
    <scope>NUCLEOTIDE SEQUENCE [LARGE SCALE MRNA] (ISOFORM 2)</scope>
    <source>
        <strain>NOD</strain>
        <tissue>Thymus</tissue>
    </source>
</reference>
<reference evidence="11 14" key="4">
    <citation type="journal article" date="2004" name="Genome Res.">
        <title>The status, quality, and expansion of the NIH full-length cDNA project: the Mammalian Gene Collection (MGC).</title>
        <authorList>
            <consortium name="The MGC Project Team"/>
        </authorList>
    </citation>
    <scope>NUCLEOTIDE SEQUENCE [LARGE SCALE MRNA] OF 1-175 (ISOFORM 1)</scope>
    <source>
        <strain evidence="14">NMRI</strain>
        <tissue evidence="14">Mammary gland</tissue>
    </source>
</reference>
<reference key="5">
    <citation type="journal article" date="2010" name="Cell">
        <title>A tissue-specific atlas of mouse protein phosphorylation and expression.</title>
        <authorList>
            <person name="Huttlin E.L."/>
            <person name="Jedrychowski M.P."/>
            <person name="Elias J.E."/>
            <person name="Goswami T."/>
            <person name="Rad R."/>
            <person name="Beausoleil S.A."/>
            <person name="Villen J."/>
            <person name="Haas W."/>
            <person name="Sowa M.E."/>
            <person name="Gygi S.P."/>
        </authorList>
    </citation>
    <scope>PHOSPHORYLATION [LARGE SCALE ANALYSIS] AT SER-107; THR-182; SER-185; SER-191; SER-372 AND THR-376</scope>
    <scope>IDENTIFICATION BY MASS SPECTROMETRY [LARGE SCALE ANALYSIS]</scope>
    <source>
        <tissue>Kidney</tissue>
        <tissue>Lung</tissue>
        <tissue>Spleen</tissue>
        <tissue>Testis</tissue>
    </source>
</reference>
<reference key="6">
    <citation type="journal article" date="2014" name="Mol. Cell. Proteomics">
        <title>Immunoaffinity enrichment and mass spectrometry analysis of protein methylation.</title>
        <authorList>
            <person name="Guo A."/>
            <person name="Gu H."/>
            <person name="Zhou J."/>
            <person name="Mulhern D."/>
            <person name="Wang Y."/>
            <person name="Lee K.A."/>
            <person name="Yang V."/>
            <person name="Aguiar M."/>
            <person name="Kornhauser J."/>
            <person name="Jia X."/>
            <person name="Ren J."/>
            <person name="Beausoleil S.A."/>
            <person name="Silva J.C."/>
            <person name="Vemulapalli V."/>
            <person name="Bedford M.T."/>
            <person name="Comb M.J."/>
        </authorList>
    </citation>
    <scope>METHYLATION [LARGE SCALE ANALYSIS] AT ARG-496</scope>
    <scope>IDENTIFICATION BY MASS SPECTROMETRY [LARGE SCALE ANALYSIS]</scope>
    <source>
        <tissue>Embryo</tissue>
    </source>
</reference>
<protein>
    <recommendedName>
        <fullName>ETS-related transcription factor Elf-2</fullName>
    </recommendedName>
    <alternativeName>
        <fullName>E74-like factor 2</fullName>
    </alternativeName>
    <alternativeName>
        <fullName>New ETS-related factor</fullName>
    </alternativeName>
</protein>
<accession>Q9JHC9</accession>
<accession>Q6NST2</accession>
<accession>Q8BTX8</accession>
<accession>Q9JHC7</accession>
<accession>Q9JHC8</accession>
<accession>Q9JHD0</accession>